<reference key="1">
    <citation type="journal article" date="1995" name="Biochem. Biophys. Res. Commun.">
        <title>A brain-specific G protein gamma subunit.</title>
        <authorList>
            <person name="Kalyanaraman S."/>
            <person name="Kalyanaraman V."/>
            <person name="Gautam N."/>
        </authorList>
    </citation>
    <scope>NUCLEOTIDE SEQUENCE [MRNA]</scope>
    <scope>TISSUE SPECIFICITY</scope>
    <source>
        <tissue>Brain</tissue>
    </source>
</reference>
<reference key="2">
    <citation type="journal article" date="1998" name="Genomics">
        <title>Structure and chromosomal localization of mouse G protein subunit gamma4 gene.</title>
        <authorList>
            <person name="Kalyanaraman S."/>
            <person name="Copeland N.G."/>
            <person name="Gilbert D.G."/>
            <person name="Jenkins N.A."/>
            <person name="Gautam N."/>
        </authorList>
    </citation>
    <scope>NUCLEOTIDE SEQUENCE [GENOMIC DNA]</scope>
</reference>
<reference key="3">
    <citation type="journal article" date="2004" name="Genome Res.">
        <title>The status, quality, and expansion of the NIH full-length cDNA project: the Mammalian Gene Collection (MGC).</title>
        <authorList>
            <consortium name="The MGC Project Team"/>
        </authorList>
    </citation>
    <scope>NUCLEOTIDE SEQUENCE [LARGE SCALE MRNA]</scope>
    <source>
        <tissue>Eye</tissue>
    </source>
</reference>
<reference key="4">
    <citation type="journal article" date="2010" name="Cell">
        <title>A tissue-specific atlas of mouse protein phosphorylation and expression.</title>
        <authorList>
            <person name="Huttlin E.L."/>
            <person name="Jedrychowski M.P."/>
            <person name="Elias J.E."/>
            <person name="Goswami T."/>
            <person name="Rad R."/>
            <person name="Beausoleil S.A."/>
            <person name="Villen J."/>
            <person name="Haas W."/>
            <person name="Sowa M.E."/>
            <person name="Gygi S.P."/>
        </authorList>
    </citation>
    <scope>IDENTIFICATION BY MASS SPECTROMETRY [LARGE SCALE ANALYSIS]</scope>
    <source>
        <tissue>Brain</tissue>
    </source>
</reference>
<reference key="5">
    <citation type="journal article" date="2012" name="Cell">
        <title>TREK-1 and Best1 channels mediate fast and slow glutamate release in astrocytes upon GPCR activation.</title>
        <authorList>
            <person name="Woo D.H."/>
            <person name="Han K.S."/>
            <person name="Shim J.W."/>
            <person name="Yoon B.E."/>
            <person name="Kim E."/>
            <person name="Bae J.Y."/>
            <person name="Oh S.J."/>
            <person name="Hwang E.M."/>
            <person name="Marmorstein A.D."/>
            <person name="Bae Y.C."/>
            <person name="Park J.Y."/>
            <person name="Lee C.J."/>
        </authorList>
    </citation>
    <scope>INTERACTION WITH KCNK2</scope>
</reference>
<reference key="6">
    <citation type="journal article" date="2014" name="Nat. Commun.">
        <title>A disulphide-linked heterodimer of TWIK-1 and TREK-1 mediates passive conductance in astrocytes.</title>
        <authorList>
            <person name="Hwang E.M."/>
            <person name="Kim E."/>
            <person name="Yarishkin O."/>
            <person name="Woo D.H."/>
            <person name="Han K.S."/>
            <person name="Park N."/>
            <person name="Bae Y."/>
            <person name="Woo J."/>
            <person name="Kim D."/>
            <person name="Park M."/>
            <person name="Lee C.J."/>
            <person name="Park J.Y."/>
        </authorList>
    </citation>
    <scope>INTERACTION WITH KCNK1</scope>
</reference>
<accession>P50153</accession>
<gene>
    <name type="primary">Gng4</name>
    <name type="synonym">Gngt4</name>
</gene>
<keyword id="KW-1003">Cell membrane</keyword>
<keyword id="KW-0449">Lipoprotein</keyword>
<keyword id="KW-0472">Membrane</keyword>
<keyword id="KW-0488">Methylation</keyword>
<keyword id="KW-0636">Prenylation</keyword>
<keyword id="KW-1185">Reference proteome</keyword>
<keyword id="KW-0807">Transducer</keyword>
<name>GBG4_MOUSE</name>
<feature type="chain" id="PRO_0000012623" description="Guanine nucleotide-binding protein G(I)/G(S)/G(O) subunit gamma-4">
    <location>
        <begin position="1"/>
        <end position="72"/>
    </location>
</feature>
<feature type="propeptide" id="PRO_0000012624" description="Removed in mature form" evidence="1">
    <location>
        <begin position="73"/>
        <end position="75"/>
    </location>
</feature>
<feature type="modified residue" description="Cysteine methyl ester" evidence="1">
    <location>
        <position position="72"/>
    </location>
</feature>
<feature type="lipid moiety-binding region" description="S-geranylgeranyl cysteine" evidence="1">
    <location>
        <position position="72"/>
    </location>
</feature>
<dbReference type="EMBL" id="U37527">
    <property type="protein sequence ID" value="AAB93460.1"/>
    <property type="molecule type" value="mRNA"/>
</dbReference>
<dbReference type="EMBL" id="AF038594">
    <property type="protein sequence ID" value="AAC40090.1"/>
    <property type="molecule type" value="Genomic_DNA"/>
</dbReference>
<dbReference type="EMBL" id="AF038593">
    <property type="protein sequence ID" value="AAC40090.1"/>
    <property type="status" value="JOINED"/>
    <property type="molecule type" value="Genomic_DNA"/>
</dbReference>
<dbReference type="EMBL" id="BC016506">
    <property type="protein sequence ID" value="AAH16506.1"/>
    <property type="molecule type" value="mRNA"/>
</dbReference>
<dbReference type="CCDS" id="CCDS36598.1"/>
<dbReference type="PIR" id="JC4339">
    <property type="entry name" value="JC4339"/>
</dbReference>
<dbReference type="RefSeq" id="NP_001289926.1">
    <property type="nucleotide sequence ID" value="NM_001302997.1"/>
</dbReference>
<dbReference type="RefSeq" id="NP_034447.1">
    <property type="nucleotide sequence ID" value="NM_010317.3"/>
</dbReference>
<dbReference type="SMR" id="P50153"/>
<dbReference type="BioGRID" id="199990">
    <property type="interactions" value="1"/>
</dbReference>
<dbReference type="DIP" id="DIP-494N"/>
<dbReference type="FunCoup" id="P50153">
    <property type="interactions" value="610"/>
</dbReference>
<dbReference type="IntAct" id="P50153">
    <property type="interactions" value="1"/>
</dbReference>
<dbReference type="STRING" id="10090.ENSMUSP00000021734"/>
<dbReference type="GlyGen" id="P50153">
    <property type="glycosylation" value="2 sites, 2 N-linked glycans (2 sites)"/>
</dbReference>
<dbReference type="iPTMnet" id="P50153"/>
<dbReference type="PhosphoSitePlus" id="P50153"/>
<dbReference type="PaxDb" id="10090-ENSMUSP00000021734"/>
<dbReference type="PeptideAtlas" id="P50153"/>
<dbReference type="ProteomicsDB" id="272936"/>
<dbReference type="Antibodypedia" id="34696">
    <property type="antibodies" value="94 antibodies from 23 providers"/>
</dbReference>
<dbReference type="DNASU" id="14706"/>
<dbReference type="Ensembl" id="ENSMUST00000021734.9">
    <property type="protein sequence ID" value="ENSMUSP00000021734.8"/>
    <property type="gene ID" value="ENSMUSG00000021303.15"/>
</dbReference>
<dbReference type="GeneID" id="14706"/>
<dbReference type="KEGG" id="mmu:14706"/>
<dbReference type="UCSC" id="uc007pml.2">
    <property type="organism name" value="mouse"/>
</dbReference>
<dbReference type="AGR" id="MGI:102703"/>
<dbReference type="CTD" id="2786"/>
<dbReference type="MGI" id="MGI:102703">
    <property type="gene designation" value="Gng4"/>
</dbReference>
<dbReference type="VEuPathDB" id="HostDB:ENSMUSG00000021303"/>
<dbReference type="eggNOG" id="KOG4119">
    <property type="taxonomic scope" value="Eukaryota"/>
</dbReference>
<dbReference type="GeneTree" id="ENSGT01100000263497"/>
<dbReference type="HOGENOM" id="CLU_168377_0_1_1"/>
<dbReference type="InParanoid" id="P50153"/>
<dbReference type="OMA" id="TFACFRG"/>
<dbReference type="OrthoDB" id="6264244at2759"/>
<dbReference type="PhylomeDB" id="P50153"/>
<dbReference type="TreeFam" id="TF319909"/>
<dbReference type="Reactome" id="R-MMU-1296041">
    <property type="pathway name" value="Activation of G protein gated Potassium channels"/>
</dbReference>
<dbReference type="Reactome" id="R-MMU-202040">
    <property type="pathway name" value="G-protein activation"/>
</dbReference>
<dbReference type="Reactome" id="R-MMU-381676">
    <property type="pathway name" value="Glucagon-like Peptide-1 (GLP1) regulates insulin secretion"/>
</dbReference>
<dbReference type="Reactome" id="R-MMU-392170">
    <property type="pathway name" value="ADP signalling through P2Y purinoceptor 12"/>
</dbReference>
<dbReference type="Reactome" id="R-MMU-392451">
    <property type="pathway name" value="G beta:gamma signalling through PI3Kgamma"/>
</dbReference>
<dbReference type="Reactome" id="R-MMU-392851">
    <property type="pathway name" value="Prostacyclin signalling through prostacyclin receptor"/>
</dbReference>
<dbReference type="Reactome" id="R-MMU-400042">
    <property type="pathway name" value="Adrenaline,noradrenaline inhibits insulin secretion"/>
</dbReference>
<dbReference type="Reactome" id="R-MMU-4086398">
    <property type="pathway name" value="Ca2+ pathway"/>
</dbReference>
<dbReference type="Reactome" id="R-MMU-416476">
    <property type="pathway name" value="G alpha (q) signalling events"/>
</dbReference>
<dbReference type="Reactome" id="R-MMU-416482">
    <property type="pathway name" value="G alpha (12/13) signalling events"/>
</dbReference>
<dbReference type="Reactome" id="R-MMU-418217">
    <property type="pathway name" value="G beta:gamma signalling through PLC beta"/>
</dbReference>
<dbReference type="Reactome" id="R-MMU-418555">
    <property type="pathway name" value="G alpha (s) signalling events"/>
</dbReference>
<dbReference type="Reactome" id="R-MMU-418592">
    <property type="pathway name" value="ADP signalling through P2Y purinoceptor 1"/>
</dbReference>
<dbReference type="Reactome" id="R-MMU-418594">
    <property type="pathway name" value="G alpha (i) signalling events"/>
</dbReference>
<dbReference type="Reactome" id="R-MMU-418597">
    <property type="pathway name" value="G alpha (z) signalling events"/>
</dbReference>
<dbReference type="Reactome" id="R-MMU-420092">
    <property type="pathway name" value="Glucagon-type ligand receptors"/>
</dbReference>
<dbReference type="Reactome" id="R-MMU-428930">
    <property type="pathway name" value="Thromboxane signalling through TP receptor"/>
</dbReference>
<dbReference type="Reactome" id="R-MMU-432040">
    <property type="pathway name" value="Vasopressin regulates renal water homeostasis via Aquaporins"/>
</dbReference>
<dbReference type="Reactome" id="R-MMU-456926">
    <property type="pathway name" value="Thrombin signalling through proteinase activated receptors (PARs)"/>
</dbReference>
<dbReference type="Reactome" id="R-MMU-500657">
    <property type="pathway name" value="Presynaptic function of Kainate receptors"/>
</dbReference>
<dbReference type="Reactome" id="R-MMU-6814122">
    <property type="pathway name" value="Cooperation of PDCL (PhLP1) and TRiC/CCT in G-protein beta folding"/>
</dbReference>
<dbReference type="Reactome" id="R-MMU-8964315">
    <property type="pathway name" value="G beta:gamma signalling through BTK"/>
</dbReference>
<dbReference type="Reactome" id="R-MMU-8964616">
    <property type="pathway name" value="G beta:gamma signalling through CDC42"/>
</dbReference>
<dbReference type="Reactome" id="R-MMU-9009391">
    <property type="pathway name" value="Extra-nuclear estrogen signaling"/>
</dbReference>
<dbReference type="Reactome" id="R-MMU-9634597">
    <property type="pathway name" value="GPER1 signaling"/>
</dbReference>
<dbReference type="Reactome" id="R-MMU-9856530">
    <property type="pathway name" value="High laminar flow shear stress activates signaling by PIEZO1 and PECAM1:CDH5:KDR in endothelial cells"/>
</dbReference>
<dbReference type="Reactome" id="R-MMU-997272">
    <property type="pathway name" value="Inhibition of voltage gated Ca2+ channels via Gbeta/gamma subunits"/>
</dbReference>
<dbReference type="BioGRID-ORCS" id="14706">
    <property type="hits" value="1 hit in 78 CRISPR screens"/>
</dbReference>
<dbReference type="PRO" id="PR:P50153"/>
<dbReference type="Proteomes" id="UP000000589">
    <property type="component" value="Chromosome 13"/>
</dbReference>
<dbReference type="RNAct" id="P50153">
    <property type="molecule type" value="protein"/>
</dbReference>
<dbReference type="Bgee" id="ENSMUSG00000021303">
    <property type="expression patterns" value="Expressed in facial nucleus and 158 other cell types or tissues"/>
</dbReference>
<dbReference type="GO" id="GO:0005834">
    <property type="term" value="C:heterotrimeric G-protein complex"/>
    <property type="evidence" value="ECO:0000247"/>
    <property type="project" value="MGI"/>
</dbReference>
<dbReference type="GO" id="GO:0045202">
    <property type="term" value="C:synapse"/>
    <property type="evidence" value="ECO:0000314"/>
    <property type="project" value="SynGO"/>
</dbReference>
<dbReference type="GO" id="GO:0031681">
    <property type="term" value="F:G-protein beta-subunit binding"/>
    <property type="evidence" value="ECO:0007669"/>
    <property type="project" value="InterPro"/>
</dbReference>
<dbReference type="GO" id="GO:0003924">
    <property type="term" value="F:GTPase activity"/>
    <property type="evidence" value="ECO:0000247"/>
    <property type="project" value="MGI"/>
</dbReference>
<dbReference type="GO" id="GO:0007186">
    <property type="term" value="P:G protein-coupled receptor signaling pathway"/>
    <property type="evidence" value="ECO:0000247"/>
    <property type="project" value="MGI"/>
</dbReference>
<dbReference type="GO" id="GO:0030308">
    <property type="term" value="P:negative regulation of cell growth"/>
    <property type="evidence" value="ECO:0007669"/>
    <property type="project" value="Ensembl"/>
</dbReference>
<dbReference type="CDD" id="cd00068">
    <property type="entry name" value="GGL"/>
    <property type="match status" value="1"/>
</dbReference>
<dbReference type="FunFam" id="4.10.260.10:FF:000001">
    <property type="entry name" value="Guanine nucleotide-binding protein subunit gamma"/>
    <property type="match status" value="1"/>
</dbReference>
<dbReference type="Gene3D" id="4.10.260.10">
    <property type="entry name" value="Transducin (heterotrimeric G protein), gamma chain"/>
    <property type="match status" value="1"/>
</dbReference>
<dbReference type="InterPro" id="IPR015898">
    <property type="entry name" value="G-protein_gamma-like_dom"/>
</dbReference>
<dbReference type="InterPro" id="IPR036284">
    <property type="entry name" value="GGL_sf"/>
</dbReference>
<dbReference type="InterPro" id="IPR001770">
    <property type="entry name" value="Gprotein-gamma"/>
</dbReference>
<dbReference type="PANTHER" id="PTHR13809">
    <property type="entry name" value="GUANINE NUCLEOTIDE-BINDING PROTEIN GAMMA SUBUNIT"/>
    <property type="match status" value="1"/>
</dbReference>
<dbReference type="Pfam" id="PF00631">
    <property type="entry name" value="G-gamma"/>
    <property type="match status" value="1"/>
</dbReference>
<dbReference type="PRINTS" id="PR00321">
    <property type="entry name" value="GPROTEING"/>
</dbReference>
<dbReference type="SMART" id="SM01224">
    <property type="entry name" value="G_gamma"/>
    <property type="match status" value="1"/>
</dbReference>
<dbReference type="SMART" id="SM00224">
    <property type="entry name" value="GGL"/>
    <property type="match status" value="1"/>
</dbReference>
<dbReference type="SUPFAM" id="SSF48670">
    <property type="entry name" value="Transducin (heterotrimeric G protein), gamma chain"/>
    <property type="match status" value="1"/>
</dbReference>
<dbReference type="PROSITE" id="PS50058">
    <property type="entry name" value="G_PROTEIN_GAMMA"/>
    <property type="match status" value="1"/>
</dbReference>
<proteinExistence type="evidence at protein level"/>
<protein>
    <recommendedName>
        <fullName>Guanine nucleotide-binding protein G(I)/G(S)/G(O) subunit gamma-4</fullName>
    </recommendedName>
</protein>
<evidence type="ECO:0000250" key="1"/>
<evidence type="ECO:0000250" key="2">
    <source>
        <dbReference type="UniProtKB" id="P50150"/>
    </source>
</evidence>
<evidence type="ECO:0000269" key="3">
    <source>
    </source>
</evidence>
<evidence type="ECO:0000269" key="4">
    <source>
    </source>
</evidence>
<evidence type="ECO:0000269" key="5">
    <source>
    </source>
</evidence>
<evidence type="ECO:0000305" key="6"/>
<sequence>MKEGMSNNSTTSISQARKAVEQLKMEACMDRVKVSQAASDLLAYCEAHVREDPLIIPVPASENPFREKKFFCTIL</sequence>
<organism>
    <name type="scientific">Mus musculus</name>
    <name type="common">Mouse</name>
    <dbReference type="NCBI Taxonomy" id="10090"/>
    <lineage>
        <taxon>Eukaryota</taxon>
        <taxon>Metazoa</taxon>
        <taxon>Chordata</taxon>
        <taxon>Craniata</taxon>
        <taxon>Vertebrata</taxon>
        <taxon>Euteleostomi</taxon>
        <taxon>Mammalia</taxon>
        <taxon>Eutheria</taxon>
        <taxon>Euarchontoglires</taxon>
        <taxon>Glires</taxon>
        <taxon>Rodentia</taxon>
        <taxon>Myomorpha</taxon>
        <taxon>Muroidea</taxon>
        <taxon>Muridae</taxon>
        <taxon>Murinae</taxon>
        <taxon>Mus</taxon>
        <taxon>Mus</taxon>
    </lineage>
</organism>
<comment type="function">
    <text evidence="6">Guanine nucleotide-binding proteins (G proteins) are involved as a modulator or transducer in various transmembrane signaling systems. The beta and gamma chains are required for the GTPase activity, for replacement of GDP by GTP, and for G protein-effector interaction.</text>
</comment>
<comment type="subunit">
    <text evidence="2 3 4">G proteins are composed of 3 units, alpha, beta and gamma. Interacts with beta-1 and beta-2, but not with beta-3 (By similarity). Interacts with KCNK1 (PubMed:24496152). Interacts (via C-terminus) with KCNK2/TREK-1 (via N-terminus); this interaction confers ion selectivity to Cl(-) and L-glutamate (PubMed:23021213).</text>
</comment>
<comment type="subcellular location">
    <subcellularLocation>
        <location evidence="6">Cell membrane</location>
        <topology evidence="6">Lipid-anchor</topology>
        <orientation evidence="6">Cytoplasmic side</orientation>
    </subcellularLocation>
</comment>
<comment type="tissue specificity">
    <text evidence="5">Brain.</text>
</comment>
<comment type="similarity">
    <text evidence="6">Belongs to the G protein gamma family.</text>
</comment>